<proteinExistence type="inferred from homology"/>
<accession>Q6F860</accession>
<name>SYT_ACIAD</name>
<protein>
    <recommendedName>
        <fullName evidence="1">Threonine--tRNA ligase</fullName>
        <ecNumber evidence="1">6.1.1.3</ecNumber>
    </recommendedName>
    <alternativeName>
        <fullName evidence="1">Threonyl-tRNA synthetase</fullName>
        <shortName evidence="1">ThrRS</shortName>
    </alternativeName>
</protein>
<dbReference type="EC" id="6.1.1.3" evidence="1"/>
<dbReference type="EMBL" id="CR543861">
    <property type="protein sequence ID" value="CAG69755.1"/>
    <property type="molecule type" value="Genomic_DNA"/>
</dbReference>
<dbReference type="RefSeq" id="WP_004924510.1">
    <property type="nucleotide sequence ID" value="NC_005966.1"/>
</dbReference>
<dbReference type="SMR" id="Q6F860"/>
<dbReference type="STRING" id="202950.GCA_001485005_02715"/>
<dbReference type="GeneID" id="45235277"/>
<dbReference type="KEGG" id="aci:ACIAD3055"/>
<dbReference type="eggNOG" id="COG0441">
    <property type="taxonomic scope" value="Bacteria"/>
</dbReference>
<dbReference type="HOGENOM" id="CLU_008554_0_1_6"/>
<dbReference type="OrthoDB" id="9802304at2"/>
<dbReference type="BioCyc" id="ASP62977:ACIAD_RS13810-MONOMER"/>
<dbReference type="Proteomes" id="UP000000430">
    <property type="component" value="Chromosome"/>
</dbReference>
<dbReference type="GO" id="GO:0005829">
    <property type="term" value="C:cytosol"/>
    <property type="evidence" value="ECO:0007669"/>
    <property type="project" value="TreeGrafter"/>
</dbReference>
<dbReference type="GO" id="GO:0005524">
    <property type="term" value="F:ATP binding"/>
    <property type="evidence" value="ECO:0007669"/>
    <property type="project" value="UniProtKB-UniRule"/>
</dbReference>
<dbReference type="GO" id="GO:0046872">
    <property type="term" value="F:metal ion binding"/>
    <property type="evidence" value="ECO:0007669"/>
    <property type="project" value="UniProtKB-KW"/>
</dbReference>
<dbReference type="GO" id="GO:0004829">
    <property type="term" value="F:threonine-tRNA ligase activity"/>
    <property type="evidence" value="ECO:0007669"/>
    <property type="project" value="UniProtKB-UniRule"/>
</dbReference>
<dbReference type="GO" id="GO:0000049">
    <property type="term" value="F:tRNA binding"/>
    <property type="evidence" value="ECO:0007669"/>
    <property type="project" value="UniProtKB-KW"/>
</dbReference>
<dbReference type="GO" id="GO:0006435">
    <property type="term" value="P:threonyl-tRNA aminoacylation"/>
    <property type="evidence" value="ECO:0007669"/>
    <property type="project" value="UniProtKB-UniRule"/>
</dbReference>
<dbReference type="CDD" id="cd01667">
    <property type="entry name" value="TGS_ThrRS"/>
    <property type="match status" value="1"/>
</dbReference>
<dbReference type="CDD" id="cd00860">
    <property type="entry name" value="ThrRS_anticodon"/>
    <property type="match status" value="1"/>
</dbReference>
<dbReference type="CDD" id="cd00771">
    <property type="entry name" value="ThrRS_core"/>
    <property type="match status" value="1"/>
</dbReference>
<dbReference type="FunFam" id="3.10.20.30:FF:000005">
    <property type="entry name" value="Threonine--tRNA ligase"/>
    <property type="match status" value="1"/>
</dbReference>
<dbReference type="FunFam" id="3.30.54.20:FF:000002">
    <property type="entry name" value="Threonine--tRNA ligase"/>
    <property type="match status" value="1"/>
</dbReference>
<dbReference type="FunFam" id="3.30.930.10:FF:000002">
    <property type="entry name" value="Threonine--tRNA ligase"/>
    <property type="match status" value="1"/>
</dbReference>
<dbReference type="FunFam" id="3.40.50.800:FF:000001">
    <property type="entry name" value="Threonine--tRNA ligase"/>
    <property type="match status" value="1"/>
</dbReference>
<dbReference type="FunFam" id="3.30.980.10:FF:000005">
    <property type="entry name" value="Threonyl-tRNA synthetase, mitochondrial"/>
    <property type="match status" value="1"/>
</dbReference>
<dbReference type="Gene3D" id="3.10.20.30">
    <property type="match status" value="1"/>
</dbReference>
<dbReference type="Gene3D" id="3.30.54.20">
    <property type="match status" value="1"/>
</dbReference>
<dbReference type="Gene3D" id="3.40.50.800">
    <property type="entry name" value="Anticodon-binding domain"/>
    <property type="match status" value="1"/>
</dbReference>
<dbReference type="Gene3D" id="3.30.930.10">
    <property type="entry name" value="Bira Bifunctional Protein, Domain 2"/>
    <property type="match status" value="1"/>
</dbReference>
<dbReference type="Gene3D" id="3.30.980.10">
    <property type="entry name" value="Threonyl-trna Synthetase, Chain A, domain 2"/>
    <property type="match status" value="1"/>
</dbReference>
<dbReference type="HAMAP" id="MF_00184">
    <property type="entry name" value="Thr_tRNA_synth"/>
    <property type="match status" value="1"/>
</dbReference>
<dbReference type="InterPro" id="IPR002314">
    <property type="entry name" value="aa-tRNA-synt_IIb"/>
</dbReference>
<dbReference type="InterPro" id="IPR006195">
    <property type="entry name" value="aa-tRNA-synth_II"/>
</dbReference>
<dbReference type="InterPro" id="IPR045864">
    <property type="entry name" value="aa-tRNA-synth_II/BPL/LPL"/>
</dbReference>
<dbReference type="InterPro" id="IPR004154">
    <property type="entry name" value="Anticodon-bd"/>
</dbReference>
<dbReference type="InterPro" id="IPR036621">
    <property type="entry name" value="Anticodon-bd_dom_sf"/>
</dbReference>
<dbReference type="InterPro" id="IPR012675">
    <property type="entry name" value="Beta-grasp_dom_sf"/>
</dbReference>
<dbReference type="InterPro" id="IPR004095">
    <property type="entry name" value="TGS"/>
</dbReference>
<dbReference type="InterPro" id="IPR012676">
    <property type="entry name" value="TGS-like"/>
</dbReference>
<dbReference type="InterPro" id="IPR002320">
    <property type="entry name" value="Thr-tRNA-ligase_IIa"/>
</dbReference>
<dbReference type="InterPro" id="IPR018163">
    <property type="entry name" value="Thr/Ala-tRNA-synth_IIc_edit"/>
</dbReference>
<dbReference type="InterPro" id="IPR047246">
    <property type="entry name" value="ThrRS_anticodon"/>
</dbReference>
<dbReference type="InterPro" id="IPR033728">
    <property type="entry name" value="ThrRS_core"/>
</dbReference>
<dbReference type="InterPro" id="IPR012947">
    <property type="entry name" value="tRNA_SAD"/>
</dbReference>
<dbReference type="NCBIfam" id="TIGR00418">
    <property type="entry name" value="thrS"/>
    <property type="match status" value="1"/>
</dbReference>
<dbReference type="PANTHER" id="PTHR11451:SF44">
    <property type="entry name" value="THREONINE--TRNA LIGASE, CHLOROPLASTIC_MITOCHONDRIAL 2"/>
    <property type="match status" value="1"/>
</dbReference>
<dbReference type="PANTHER" id="PTHR11451">
    <property type="entry name" value="THREONINE-TRNA LIGASE"/>
    <property type="match status" value="1"/>
</dbReference>
<dbReference type="Pfam" id="PF03129">
    <property type="entry name" value="HGTP_anticodon"/>
    <property type="match status" value="1"/>
</dbReference>
<dbReference type="Pfam" id="PF02824">
    <property type="entry name" value="TGS"/>
    <property type="match status" value="1"/>
</dbReference>
<dbReference type="Pfam" id="PF00587">
    <property type="entry name" value="tRNA-synt_2b"/>
    <property type="match status" value="1"/>
</dbReference>
<dbReference type="Pfam" id="PF07973">
    <property type="entry name" value="tRNA_SAD"/>
    <property type="match status" value="1"/>
</dbReference>
<dbReference type="PRINTS" id="PR01047">
    <property type="entry name" value="TRNASYNTHTHR"/>
</dbReference>
<dbReference type="SMART" id="SM00863">
    <property type="entry name" value="tRNA_SAD"/>
    <property type="match status" value="1"/>
</dbReference>
<dbReference type="SUPFAM" id="SSF52954">
    <property type="entry name" value="Class II aaRS ABD-related"/>
    <property type="match status" value="1"/>
</dbReference>
<dbReference type="SUPFAM" id="SSF55681">
    <property type="entry name" value="Class II aaRS and biotin synthetases"/>
    <property type="match status" value="1"/>
</dbReference>
<dbReference type="SUPFAM" id="SSF81271">
    <property type="entry name" value="TGS-like"/>
    <property type="match status" value="1"/>
</dbReference>
<dbReference type="SUPFAM" id="SSF55186">
    <property type="entry name" value="ThrRS/AlaRS common domain"/>
    <property type="match status" value="1"/>
</dbReference>
<dbReference type="PROSITE" id="PS50862">
    <property type="entry name" value="AA_TRNA_LIGASE_II"/>
    <property type="match status" value="1"/>
</dbReference>
<dbReference type="PROSITE" id="PS51880">
    <property type="entry name" value="TGS"/>
    <property type="match status" value="1"/>
</dbReference>
<sequence length="640" mass="72996">MPIITLPNGDQKSFDQPVSVMQVAQSIGPGLAKNTVAGRVNDRLVDACDLITEDATLQIITPKDPEGVEIIRHSCAHLVGHAVKQLFPDVQMVIGPVIEEGFYYDIFSPKPFTLDDMAAIEARMKQLIDQDYDVVKKMTPREQVIQEFTTRGETYKLRLIDDMPEETQMGLYYHQEYVDMCRGPHVPNTKFLKNFKLTKISGAYWRGDAKNEQLQRIYGTAWSDKKELAAYIKRIEEAEKRDHRKIGKALDLFHMQEEAPGMVFWHANGWTIYQALEQYMRKVQQDNGYQEVRTPQIVDFTLWEKSGHAANYAENMFTTHSESRNYAVKPMNCPCHVQVFNQGLKSYRDLPVRLAEFGSCHRNEPSGSLHGIMRVRGFTQDDGHIFCTKEQIGKEVADFIQLTLDVYKDFGFEDVQMKLSTRPEKRVGDDRLWDLAEKSLADALDAAGLEWELQPGEGAFYGPKIEFSLKDCLGRVWQCGTIQCDFNLPIRLDASFVTEDNERDQPVMLHRAILGSFERFIGILIEHYAGFMPPWLAPVQACVMNITDSQAEACQQVVAKLKENGLRAISDLRNEKIGFKIRERTLERIPYLLVLGDREVEEGTVNVRTRSGKNLGTMSIDAFVDLVKSAVAERGRYIVE</sequence>
<evidence type="ECO:0000255" key="1">
    <source>
        <dbReference type="HAMAP-Rule" id="MF_00184"/>
    </source>
</evidence>
<evidence type="ECO:0000255" key="2">
    <source>
        <dbReference type="PROSITE-ProRule" id="PRU01228"/>
    </source>
</evidence>
<feature type="chain" id="PRO_0000100930" description="Threonine--tRNA ligase">
    <location>
        <begin position="1"/>
        <end position="640"/>
    </location>
</feature>
<feature type="domain" description="TGS" evidence="2">
    <location>
        <begin position="1"/>
        <end position="61"/>
    </location>
</feature>
<feature type="region of interest" description="Catalytic" evidence="1">
    <location>
        <begin position="242"/>
        <end position="533"/>
    </location>
</feature>
<feature type="binding site" evidence="1">
    <location>
        <position position="333"/>
    </location>
    <ligand>
        <name>Zn(2+)</name>
        <dbReference type="ChEBI" id="CHEBI:29105"/>
    </ligand>
</feature>
<feature type="binding site" evidence="1">
    <location>
        <position position="384"/>
    </location>
    <ligand>
        <name>Zn(2+)</name>
        <dbReference type="ChEBI" id="CHEBI:29105"/>
    </ligand>
</feature>
<feature type="binding site" evidence="1">
    <location>
        <position position="510"/>
    </location>
    <ligand>
        <name>Zn(2+)</name>
        <dbReference type="ChEBI" id="CHEBI:29105"/>
    </ligand>
</feature>
<gene>
    <name evidence="1" type="primary">thrS</name>
    <name type="ordered locus">ACIAD3055</name>
</gene>
<keyword id="KW-0030">Aminoacyl-tRNA synthetase</keyword>
<keyword id="KW-0067">ATP-binding</keyword>
<keyword id="KW-0963">Cytoplasm</keyword>
<keyword id="KW-0436">Ligase</keyword>
<keyword id="KW-0479">Metal-binding</keyword>
<keyword id="KW-0547">Nucleotide-binding</keyword>
<keyword id="KW-0648">Protein biosynthesis</keyword>
<keyword id="KW-0694">RNA-binding</keyword>
<keyword id="KW-0820">tRNA-binding</keyword>
<keyword id="KW-0862">Zinc</keyword>
<reference key="1">
    <citation type="journal article" date="2004" name="Nucleic Acids Res.">
        <title>Unique features revealed by the genome sequence of Acinetobacter sp. ADP1, a versatile and naturally transformation competent bacterium.</title>
        <authorList>
            <person name="Barbe V."/>
            <person name="Vallenet D."/>
            <person name="Fonknechten N."/>
            <person name="Kreimeyer A."/>
            <person name="Oztas S."/>
            <person name="Labarre L."/>
            <person name="Cruveiller S."/>
            <person name="Robert C."/>
            <person name="Duprat S."/>
            <person name="Wincker P."/>
            <person name="Ornston L.N."/>
            <person name="Weissenbach J."/>
            <person name="Marliere P."/>
            <person name="Cohen G.N."/>
            <person name="Medigue C."/>
        </authorList>
    </citation>
    <scope>NUCLEOTIDE SEQUENCE [LARGE SCALE GENOMIC DNA]</scope>
    <source>
        <strain>ATCC 33305 / BD413 / ADP1</strain>
    </source>
</reference>
<comment type="function">
    <text evidence="1">Catalyzes the attachment of threonine to tRNA(Thr) in a two-step reaction: L-threonine is first activated by ATP to form Thr-AMP and then transferred to the acceptor end of tRNA(Thr). Also edits incorrectly charged L-seryl-tRNA(Thr).</text>
</comment>
<comment type="catalytic activity">
    <reaction evidence="1">
        <text>tRNA(Thr) + L-threonine + ATP = L-threonyl-tRNA(Thr) + AMP + diphosphate + H(+)</text>
        <dbReference type="Rhea" id="RHEA:24624"/>
        <dbReference type="Rhea" id="RHEA-COMP:9670"/>
        <dbReference type="Rhea" id="RHEA-COMP:9704"/>
        <dbReference type="ChEBI" id="CHEBI:15378"/>
        <dbReference type="ChEBI" id="CHEBI:30616"/>
        <dbReference type="ChEBI" id="CHEBI:33019"/>
        <dbReference type="ChEBI" id="CHEBI:57926"/>
        <dbReference type="ChEBI" id="CHEBI:78442"/>
        <dbReference type="ChEBI" id="CHEBI:78534"/>
        <dbReference type="ChEBI" id="CHEBI:456215"/>
        <dbReference type="EC" id="6.1.1.3"/>
    </reaction>
</comment>
<comment type="cofactor">
    <cofactor evidence="1">
        <name>Zn(2+)</name>
        <dbReference type="ChEBI" id="CHEBI:29105"/>
    </cofactor>
    <text evidence="1">Binds 1 zinc ion per subunit.</text>
</comment>
<comment type="subunit">
    <text evidence="1">Homodimer.</text>
</comment>
<comment type="subcellular location">
    <subcellularLocation>
        <location evidence="1">Cytoplasm</location>
    </subcellularLocation>
</comment>
<comment type="similarity">
    <text evidence="1">Belongs to the class-II aminoacyl-tRNA synthetase family.</text>
</comment>
<organism>
    <name type="scientific">Acinetobacter baylyi (strain ATCC 33305 / BD413 / ADP1)</name>
    <dbReference type="NCBI Taxonomy" id="62977"/>
    <lineage>
        <taxon>Bacteria</taxon>
        <taxon>Pseudomonadati</taxon>
        <taxon>Pseudomonadota</taxon>
        <taxon>Gammaproteobacteria</taxon>
        <taxon>Moraxellales</taxon>
        <taxon>Moraxellaceae</taxon>
        <taxon>Acinetobacter</taxon>
    </lineage>
</organism>